<gene>
    <name type="primary">DDX5</name>
</gene>
<comment type="function">
    <text evidence="1">Involved in the alternative regulation of pre-mRNA splicing; its RNA helicase activity is necessary for increasing tau exon 10 inclusion and occurs in a RBM4-dependent manner. Binds to the tau pre-mRNA in the stem-loop region downstream of exon 10. The rate of ATP hydrolysis is highly stimulated by single-stranded RNA. Involved in transcriptional regulation; the function is independent of the RNA helicase activity. Transcriptional coactivator for androgen receptor AR but probably not ESR1. Synergizes with DDX17 and SRA1 RNA to activate MYOD1 transcriptional activity and involved in skeletal muscle differentiation. Transcriptional coactivator for p53/TP53 and involved in p53/TP53 transcriptional response to DNA damage and p53/TP53-dependent apoptosis. Transcriptional coactivator for RUNX2 and involved in regulation of osteoblast differentiation. Acts as a transcriptional repressor in a promoter-specific manner; the function probably involves association with histone deacetylases, such as HDAC1. As component of a large PER complex is involved in the inhibition of 3' transcriptional termination of circadian target genes such as PER1 and NR1D1 and the control of the circadian rhythms (By similarity).</text>
</comment>
<comment type="catalytic activity">
    <reaction>
        <text>ATP + H2O = ADP + phosphate + H(+)</text>
        <dbReference type="Rhea" id="RHEA:13065"/>
        <dbReference type="ChEBI" id="CHEBI:15377"/>
        <dbReference type="ChEBI" id="CHEBI:15378"/>
        <dbReference type="ChEBI" id="CHEBI:30616"/>
        <dbReference type="ChEBI" id="CHEBI:43474"/>
        <dbReference type="ChEBI" id="CHEBI:456216"/>
        <dbReference type="EC" id="3.6.4.13"/>
    </reaction>
</comment>
<comment type="subunit">
    <text evidence="2 3">Identified in the spliceosome C complex. Component of a ribonucleoprotein complex containing mRNAs and RNA-binding proteins including DDX5, HNRNPH2 and SRSF1 as well as splicing regulator ARVCF. Interacts with RBM4; the interaction occurs in an RNA-independent manner. Interacts with AGO1 and AGO2. Interacts with ESR1, AR, EP300, CREBBP, POLR2A, TP53, RUNX2 and HDAC1. Self-associates. Interacts with DDX17. Interacts with BRDT. The large PER complex involved in the repression of transcriptional termination is composed of at least PER2, CDK9, DDX5, DHX9, NCBP1 and POLR2A (active) (By similarity). Interacts with DHX36; this interaction occurs in a RNA-dependent manner (By similarity). Interacts with NUPR1 (By similarity). Interacts with ERCC6 (By similarity). Interacts with DDX3X in the cytoplasm; this interaction may be more efficient when both proteins are unphosphorylated (By similarity).</text>
</comment>
<comment type="subcellular location">
    <subcellularLocation>
        <location evidence="2">Nucleus</location>
    </subcellularLocation>
    <subcellularLocation>
        <location evidence="2">Nucleus</location>
        <location evidence="2">Nucleolus</location>
    </subcellularLocation>
    <subcellularLocation>
        <location evidence="2">Cytoplasm</location>
    </subcellularLocation>
    <text evidence="2">During the G0 phase, predominantly located in the nucleus. Cytoplasmic levels increase during the G1/S phase. During the M phase, located at the vicinity of the condensed chromosomes. At G1, localizes in the cytoplasm.</text>
</comment>
<comment type="PTM">
    <text evidence="2">Sumoylated; sumoylation, promoted by PIAS1, promotes interaction with HDAC1 and transcriptional repression activity. Sumoylation also significantly increases stability, and reduces polyubiquitination (By similarity).</text>
</comment>
<comment type="PTM">
    <text evidence="2">Polyubiquitinated, leading to proteasomal degradation.</text>
</comment>
<comment type="PTM">
    <text evidence="2">Weakly phosphorylated in the G1/S phase of the cell cycle and much more at G2/M, especially at Thr and Tyr residues.</text>
</comment>
<comment type="similarity">
    <text evidence="7">Belongs to the DEAD box helicase family. DDX5/DBP2 subfamily.</text>
</comment>
<sequence length="614" mass="69105">MSGYSSDRDRGRDRGFGAPRFGGSRAGPLSGKKFGNPGEKLVKKKWDLDEPPKFEKNFYQEHPDLARRTAQEVETYRRSKEITVRGHNCPKPVLNFYEANFPANVMDVIARQNFTEPTAIQAQGWPVALSGLDMVGVAQTGSGKTLSYLLPAIVHINHQPFLERGDGPICLVLAPTRELAQQVQQVAAEYCRACRLKSTCIYGGAPKGPQIRDLERGVEICIATPGRLIDFLECGKTNLRRTTYLVLDEADRMLDMGFEPQIRKIVDQIRPDRQTLMWSATWPKEVRQLAEDFLKDYIHINIGALELSANHNILQIVDVCHDVEKDEKLIRLMEEIMSEKENKTIVFVETKRRCDELTRKMRRDGWPAMGIHGDKSQQERDWVLNEFKHGKAPILIATDVASRGLDVEDVKFVINYDYPNSSEDYIHRIGRTARSTKTGTAYTFFTPNNIKQVSDLISVLREANQAINPKLLQLVEDRGSGRSRGRGGMKDDRRDRYSAGKRGGFNTFRDRENYDRGYSSLLKRDFGAKTQNGAYSAANYTNGSFGSNFVSAGIQTSFRTGNPTGTYQNGYDSTQQYGSNVPNMHNGMNQQAYAYPATAAAPMIGYPMPTGYSQ</sequence>
<keyword id="KW-0007">Acetylation</keyword>
<keyword id="KW-0067">ATP-binding</keyword>
<keyword id="KW-0090">Biological rhythms</keyword>
<keyword id="KW-0963">Cytoplasm</keyword>
<keyword id="KW-0347">Helicase</keyword>
<keyword id="KW-0378">Hydrolase</keyword>
<keyword id="KW-1017">Isopeptide bond</keyword>
<keyword id="KW-0488">Methylation</keyword>
<keyword id="KW-0507">mRNA processing</keyword>
<keyword id="KW-0508">mRNA splicing</keyword>
<keyword id="KW-0547">Nucleotide-binding</keyword>
<keyword id="KW-0539">Nucleus</keyword>
<keyword id="KW-0597">Phosphoprotein</keyword>
<keyword id="KW-1185">Reference proteome</keyword>
<keyword id="KW-0694">RNA-binding</keyword>
<keyword id="KW-0747">Spliceosome</keyword>
<keyword id="KW-0804">Transcription</keyword>
<keyword id="KW-0805">Transcription regulation</keyword>
<keyword id="KW-0832">Ubl conjugation</keyword>
<accession>Q5R4I9</accession>
<dbReference type="EC" id="3.6.4.13"/>
<dbReference type="EMBL" id="CR861259">
    <property type="protein sequence ID" value="CAH93327.1"/>
    <property type="molecule type" value="mRNA"/>
</dbReference>
<dbReference type="RefSeq" id="NP_001126958.1">
    <property type="nucleotide sequence ID" value="NM_001133486.1"/>
</dbReference>
<dbReference type="SMR" id="Q5R4I9"/>
<dbReference type="STRING" id="9601.ENSPPYP00000009602"/>
<dbReference type="GeneID" id="100173977"/>
<dbReference type="KEGG" id="pon:100173977"/>
<dbReference type="CTD" id="1655"/>
<dbReference type="eggNOG" id="KOG0331">
    <property type="taxonomic scope" value="Eukaryota"/>
</dbReference>
<dbReference type="InParanoid" id="Q5R4I9"/>
<dbReference type="OrthoDB" id="196131at2759"/>
<dbReference type="Proteomes" id="UP000001595">
    <property type="component" value="Unplaced"/>
</dbReference>
<dbReference type="GO" id="GO:0005737">
    <property type="term" value="C:cytoplasm"/>
    <property type="evidence" value="ECO:0007669"/>
    <property type="project" value="UniProtKB-SubCell"/>
</dbReference>
<dbReference type="GO" id="GO:0016607">
    <property type="term" value="C:nuclear speck"/>
    <property type="evidence" value="ECO:0000250"/>
    <property type="project" value="UniProtKB"/>
</dbReference>
<dbReference type="GO" id="GO:0005730">
    <property type="term" value="C:nucleolus"/>
    <property type="evidence" value="ECO:0000250"/>
    <property type="project" value="UniProtKB"/>
</dbReference>
<dbReference type="GO" id="GO:0005634">
    <property type="term" value="C:nucleus"/>
    <property type="evidence" value="ECO:0000250"/>
    <property type="project" value="UniProtKB"/>
</dbReference>
<dbReference type="GO" id="GO:0005681">
    <property type="term" value="C:spliceosomal complex"/>
    <property type="evidence" value="ECO:0007669"/>
    <property type="project" value="UniProtKB-KW"/>
</dbReference>
<dbReference type="GO" id="GO:0005524">
    <property type="term" value="F:ATP binding"/>
    <property type="evidence" value="ECO:0007669"/>
    <property type="project" value="UniProtKB-KW"/>
</dbReference>
<dbReference type="GO" id="GO:0016887">
    <property type="term" value="F:ATP hydrolysis activity"/>
    <property type="evidence" value="ECO:0007669"/>
    <property type="project" value="RHEA"/>
</dbReference>
<dbReference type="GO" id="GO:0003730">
    <property type="term" value="F:mRNA 3'-UTR binding"/>
    <property type="evidence" value="ECO:0000250"/>
    <property type="project" value="UniProtKB"/>
</dbReference>
<dbReference type="GO" id="GO:0050681">
    <property type="term" value="F:nuclear androgen receptor binding"/>
    <property type="evidence" value="ECO:0000250"/>
    <property type="project" value="UniProtKB"/>
</dbReference>
<dbReference type="GO" id="GO:1990841">
    <property type="term" value="F:promoter-specific chromatin binding"/>
    <property type="evidence" value="ECO:0000250"/>
    <property type="project" value="UniProtKB"/>
</dbReference>
<dbReference type="GO" id="GO:0043021">
    <property type="term" value="F:ribonucleoprotein complex binding"/>
    <property type="evidence" value="ECO:0000250"/>
    <property type="project" value="UniProtKB"/>
</dbReference>
<dbReference type="GO" id="GO:0003724">
    <property type="term" value="F:RNA helicase activity"/>
    <property type="evidence" value="ECO:0000250"/>
    <property type="project" value="UniProtKB"/>
</dbReference>
<dbReference type="GO" id="GO:0000380">
    <property type="term" value="P:alternative mRNA splicing, via spliceosome"/>
    <property type="evidence" value="ECO:0000250"/>
    <property type="project" value="UniProtKB"/>
</dbReference>
<dbReference type="GO" id="GO:0030521">
    <property type="term" value="P:androgen receptor signaling pathway"/>
    <property type="evidence" value="ECO:0000250"/>
    <property type="project" value="UniProtKB"/>
</dbReference>
<dbReference type="GO" id="GO:0001837">
    <property type="term" value="P:epithelial to mesenchymal transition"/>
    <property type="evidence" value="ECO:0000250"/>
    <property type="project" value="UniProtKB"/>
</dbReference>
<dbReference type="GO" id="GO:0030520">
    <property type="term" value="P:estrogen receptor signaling pathway"/>
    <property type="evidence" value="ECO:0000250"/>
    <property type="project" value="UniProtKB"/>
</dbReference>
<dbReference type="GO" id="GO:0072332">
    <property type="term" value="P:intrinsic apoptotic signaling pathway by p53 class mediator"/>
    <property type="evidence" value="ECO:0000250"/>
    <property type="project" value="UniProtKB"/>
</dbReference>
<dbReference type="GO" id="GO:0061614">
    <property type="term" value="P:miRNA transcription"/>
    <property type="evidence" value="ECO:0000250"/>
    <property type="project" value="UniProtKB"/>
</dbReference>
<dbReference type="GO" id="GO:0045445">
    <property type="term" value="P:myoblast differentiation"/>
    <property type="evidence" value="ECO:0000250"/>
    <property type="project" value="UniProtKB"/>
</dbReference>
<dbReference type="GO" id="GO:0000122">
    <property type="term" value="P:negative regulation of transcription by RNA polymerase II"/>
    <property type="evidence" value="ECO:0000250"/>
    <property type="project" value="UniProtKB"/>
</dbReference>
<dbReference type="GO" id="GO:0000956">
    <property type="term" value="P:nuclear-transcribed mRNA catabolic process"/>
    <property type="evidence" value="ECO:0000250"/>
    <property type="project" value="UniProtKB"/>
</dbReference>
<dbReference type="GO" id="GO:0043517">
    <property type="term" value="P:positive regulation of DNA damage response, signal transduction by p53 class mediator"/>
    <property type="evidence" value="ECO:0000250"/>
    <property type="project" value="UniProtKB"/>
</dbReference>
<dbReference type="GO" id="GO:0000381">
    <property type="term" value="P:regulation of alternative mRNA splicing, via spliceosome"/>
    <property type="evidence" value="ECO:0000250"/>
    <property type="project" value="UniProtKB"/>
</dbReference>
<dbReference type="GO" id="GO:0060765">
    <property type="term" value="P:regulation of androgen receptor signaling pathway"/>
    <property type="evidence" value="ECO:0000250"/>
    <property type="project" value="UniProtKB"/>
</dbReference>
<dbReference type="GO" id="GO:0045667">
    <property type="term" value="P:regulation of osteoblast differentiation"/>
    <property type="evidence" value="ECO:0000250"/>
    <property type="project" value="UniProtKB"/>
</dbReference>
<dbReference type="GO" id="GO:2001014">
    <property type="term" value="P:regulation of skeletal muscle cell differentiation"/>
    <property type="evidence" value="ECO:0000250"/>
    <property type="project" value="UniProtKB"/>
</dbReference>
<dbReference type="GO" id="GO:0006357">
    <property type="term" value="P:regulation of transcription by RNA polymerase II"/>
    <property type="evidence" value="ECO:0000250"/>
    <property type="project" value="UniProtKB"/>
</dbReference>
<dbReference type="GO" id="GO:0048511">
    <property type="term" value="P:rhythmic process"/>
    <property type="evidence" value="ECO:0007669"/>
    <property type="project" value="UniProtKB-KW"/>
</dbReference>
<dbReference type="CDD" id="cd18049">
    <property type="entry name" value="DEADc_DDX5"/>
    <property type="match status" value="1"/>
</dbReference>
<dbReference type="CDD" id="cd18787">
    <property type="entry name" value="SF2_C_DEAD"/>
    <property type="match status" value="1"/>
</dbReference>
<dbReference type="FunFam" id="3.40.50.300:FF:000008">
    <property type="entry name" value="ATP-dependent RNA helicase RhlB"/>
    <property type="match status" value="1"/>
</dbReference>
<dbReference type="FunFam" id="3.40.50.300:FF:000079">
    <property type="entry name" value="probable ATP-dependent RNA helicase DDX17"/>
    <property type="match status" value="1"/>
</dbReference>
<dbReference type="Gene3D" id="3.40.50.300">
    <property type="entry name" value="P-loop containing nucleotide triphosphate hydrolases"/>
    <property type="match status" value="2"/>
</dbReference>
<dbReference type="InterPro" id="IPR011545">
    <property type="entry name" value="DEAD/DEAH_box_helicase_dom"/>
</dbReference>
<dbReference type="InterPro" id="IPR014001">
    <property type="entry name" value="Helicase_ATP-bd"/>
</dbReference>
<dbReference type="InterPro" id="IPR001650">
    <property type="entry name" value="Helicase_C-like"/>
</dbReference>
<dbReference type="InterPro" id="IPR027417">
    <property type="entry name" value="P-loop_NTPase"/>
</dbReference>
<dbReference type="InterPro" id="IPR012587">
    <property type="entry name" value="P68_rpt"/>
</dbReference>
<dbReference type="InterPro" id="IPR000629">
    <property type="entry name" value="RNA-helicase_DEAD-box_CS"/>
</dbReference>
<dbReference type="InterPro" id="IPR014014">
    <property type="entry name" value="RNA_helicase_DEAD_Q_motif"/>
</dbReference>
<dbReference type="PANTHER" id="PTHR47958">
    <property type="entry name" value="ATP-DEPENDENT RNA HELICASE DBP3"/>
    <property type="match status" value="1"/>
</dbReference>
<dbReference type="Pfam" id="PF00270">
    <property type="entry name" value="DEAD"/>
    <property type="match status" value="1"/>
</dbReference>
<dbReference type="Pfam" id="PF00271">
    <property type="entry name" value="Helicase_C"/>
    <property type="match status" value="1"/>
</dbReference>
<dbReference type="Pfam" id="PF08061">
    <property type="entry name" value="P68HR"/>
    <property type="match status" value="2"/>
</dbReference>
<dbReference type="SMART" id="SM00487">
    <property type="entry name" value="DEXDc"/>
    <property type="match status" value="1"/>
</dbReference>
<dbReference type="SMART" id="SM00490">
    <property type="entry name" value="HELICc"/>
    <property type="match status" value="1"/>
</dbReference>
<dbReference type="SMART" id="SM01414">
    <property type="entry name" value="P68HR"/>
    <property type="match status" value="2"/>
</dbReference>
<dbReference type="SUPFAM" id="SSF52540">
    <property type="entry name" value="P-loop containing nucleoside triphosphate hydrolases"/>
    <property type="match status" value="1"/>
</dbReference>
<dbReference type="PROSITE" id="PS00039">
    <property type="entry name" value="DEAD_ATP_HELICASE"/>
    <property type="match status" value="1"/>
</dbReference>
<dbReference type="PROSITE" id="PS51192">
    <property type="entry name" value="HELICASE_ATP_BIND_1"/>
    <property type="match status" value="1"/>
</dbReference>
<dbReference type="PROSITE" id="PS51194">
    <property type="entry name" value="HELICASE_CTER"/>
    <property type="match status" value="1"/>
</dbReference>
<dbReference type="PROSITE" id="PS51195">
    <property type="entry name" value="Q_MOTIF"/>
    <property type="match status" value="1"/>
</dbReference>
<protein>
    <recommendedName>
        <fullName>Probable ATP-dependent RNA helicase DDX5</fullName>
        <ecNumber>3.6.4.13</ecNumber>
    </recommendedName>
    <alternativeName>
        <fullName>DEAD box protein 5</fullName>
    </alternativeName>
</protein>
<reference key="1">
    <citation type="submission" date="2004-11" db="EMBL/GenBank/DDBJ databases">
        <authorList>
            <consortium name="The German cDNA consortium"/>
        </authorList>
    </citation>
    <scope>NUCLEOTIDE SEQUENCE [LARGE SCALE MRNA]</scope>
    <source>
        <tissue>Brain cortex</tissue>
    </source>
</reference>
<evidence type="ECO:0000250" key="1"/>
<evidence type="ECO:0000250" key="2">
    <source>
        <dbReference type="UniProtKB" id="P17844"/>
    </source>
</evidence>
<evidence type="ECO:0000250" key="3">
    <source>
        <dbReference type="UniProtKB" id="Q61656"/>
    </source>
</evidence>
<evidence type="ECO:0000255" key="4">
    <source>
        <dbReference type="PROSITE-ProRule" id="PRU00541"/>
    </source>
</evidence>
<evidence type="ECO:0000255" key="5">
    <source>
        <dbReference type="PROSITE-ProRule" id="PRU00542"/>
    </source>
</evidence>
<evidence type="ECO:0000256" key="6">
    <source>
        <dbReference type="SAM" id="MobiDB-lite"/>
    </source>
</evidence>
<evidence type="ECO:0000305" key="7"/>
<organism>
    <name type="scientific">Pongo abelii</name>
    <name type="common">Sumatran orangutan</name>
    <name type="synonym">Pongo pygmaeus abelii</name>
    <dbReference type="NCBI Taxonomy" id="9601"/>
    <lineage>
        <taxon>Eukaryota</taxon>
        <taxon>Metazoa</taxon>
        <taxon>Chordata</taxon>
        <taxon>Craniata</taxon>
        <taxon>Vertebrata</taxon>
        <taxon>Euteleostomi</taxon>
        <taxon>Mammalia</taxon>
        <taxon>Eutheria</taxon>
        <taxon>Euarchontoglires</taxon>
        <taxon>Primates</taxon>
        <taxon>Haplorrhini</taxon>
        <taxon>Catarrhini</taxon>
        <taxon>Hominidae</taxon>
        <taxon>Pongo</taxon>
    </lineage>
</organism>
<feature type="chain" id="PRO_0000252206" description="Probable ATP-dependent RNA helicase DDX5">
    <location>
        <begin position="1"/>
        <end position="614"/>
    </location>
</feature>
<feature type="domain" description="Helicase ATP-binding" evidence="4">
    <location>
        <begin position="125"/>
        <end position="300"/>
    </location>
</feature>
<feature type="domain" description="Helicase C-terminal" evidence="5">
    <location>
        <begin position="328"/>
        <end position="475"/>
    </location>
</feature>
<feature type="region of interest" description="Disordered" evidence="6">
    <location>
        <begin position="1"/>
        <end position="46"/>
    </location>
</feature>
<feature type="region of interest" description="Transactivation domain" evidence="1">
    <location>
        <begin position="477"/>
        <end position="614"/>
    </location>
</feature>
<feature type="region of interest" description="Disordered" evidence="6">
    <location>
        <begin position="477"/>
        <end position="504"/>
    </location>
</feature>
<feature type="short sequence motif" description="Q motif">
    <location>
        <begin position="94"/>
        <end position="122"/>
    </location>
</feature>
<feature type="short sequence motif" description="DEAD box">
    <location>
        <begin position="248"/>
        <end position="251"/>
    </location>
</feature>
<feature type="compositionally biased region" description="Basic and acidic residues" evidence="6">
    <location>
        <begin position="1"/>
        <end position="15"/>
    </location>
</feature>
<feature type="compositionally biased region" description="Basic and acidic residues" evidence="6">
    <location>
        <begin position="488"/>
        <end position="498"/>
    </location>
</feature>
<feature type="binding site" evidence="4">
    <location>
        <begin position="114"/>
        <end position="116"/>
    </location>
    <ligand>
        <name>ATP</name>
        <dbReference type="ChEBI" id="CHEBI:30616"/>
    </ligand>
</feature>
<feature type="binding site" evidence="1">
    <location>
        <position position="121"/>
    </location>
    <ligand>
        <name>ATP</name>
        <dbReference type="ChEBI" id="CHEBI:30616"/>
    </ligand>
</feature>
<feature type="binding site" evidence="4">
    <location>
        <begin position="138"/>
        <end position="145"/>
    </location>
    <ligand>
        <name>ATP</name>
        <dbReference type="ChEBI" id="CHEBI:30616"/>
    </ligand>
</feature>
<feature type="modified residue" description="Phosphoserine" evidence="2">
    <location>
        <position position="24"/>
    </location>
</feature>
<feature type="modified residue" description="N6-acetyllysine; alternate" evidence="2">
    <location>
        <position position="32"/>
    </location>
</feature>
<feature type="modified residue" description="N6-acetyllysine" evidence="2">
    <location>
        <position position="33"/>
    </location>
</feature>
<feature type="modified residue" description="N6-acetyllysine" evidence="2">
    <location>
        <position position="40"/>
    </location>
</feature>
<feature type="modified residue" description="N6-acetyllysine" evidence="3">
    <location>
        <position position="236"/>
    </location>
</feature>
<feature type="modified residue" description="Phosphotyrosine" evidence="2">
    <location>
        <position position="297"/>
    </location>
</feature>
<feature type="modified residue" description="Phosphoserine" evidence="2">
    <location>
        <position position="480"/>
    </location>
</feature>
<feature type="modified residue" description="Phosphoserine" evidence="2">
    <location>
        <position position="520"/>
    </location>
</feature>
<feature type="cross-link" description="Glycyl lysine isopeptide (Lys-Gly) (interchain with G-Cter in SUMO2); alternate" evidence="2">
    <location>
        <position position="32"/>
    </location>
</feature>
<feature type="cross-link" description="Glycyl lysine isopeptide (Lys-Gly) (interchain with G-Cter in SUMO2)" evidence="2">
    <location>
        <position position="45"/>
    </location>
</feature>
<feature type="cross-link" description="Glycyl lysine isopeptide (Lys-Gly) (interchain with G-Cter in SUMO); alternate" evidence="1">
    <location>
        <position position="53"/>
    </location>
</feature>
<feature type="cross-link" description="Glycyl lysine isopeptide (Lys-Gly) (interchain with G-Cter in SUMO1); alternate" evidence="2">
    <location>
        <position position="53"/>
    </location>
</feature>
<feature type="cross-link" description="Glycyl lysine isopeptide (Lys-Gly) (interchain with G-Cter in SUMO2); alternate" evidence="2">
    <location>
        <position position="53"/>
    </location>
</feature>
<feature type="cross-link" description="Glycyl lysine isopeptide (Lys-Gly) (interchain with G-Cter in SUMO2)" evidence="2">
    <location>
        <position position="340"/>
    </location>
</feature>
<feature type="cross-link" description="Glycyl lysine isopeptide (Lys-Gly) (interchain with G-Cter in SUMO2)" evidence="2">
    <location>
        <position position="343"/>
    </location>
</feature>
<feature type="cross-link" description="Glycyl lysine isopeptide (Lys-Gly) (interchain with G-Cter in SUMO2)" evidence="2">
    <location>
        <position position="388"/>
    </location>
</feature>
<feature type="cross-link" description="Glycyl lysine isopeptide (Lys-Gly) (interchain with G-Cter in SUMO2)" evidence="2">
    <location>
        <position position="391"/>
    </location>
</feature>
<feature type="cross-link" description="Glycyl lysine isopeptide (Lys-Gly) (interchain with G-Cter in SUMO2)" evidence="2">
    <location>
        <position position="411"/>
    </location>
</feature>
<feature type="cross-link" description="Glycyl lysine isopeptide (Lys-Gly) (interchain with G-Cter in SUMO2)" evidence="2">
    <location>
        <position position="437"/>
    </location>
</feature>
<feature type="cross-link" description="Glycyl lysine isopeptide (Lys-Gly) (interchain with G-Cter in SUMO2)" evidence="2">
    <location>
        <position position="451"/>
    </location>
</feature>
<feature type="cross-link" description="Glycyl lysine isopeptide (Lys-Gly) (interchain with G-Cter in SUMO2)" evidence="2">
    <location>
        <position position="470"/>
    </location>
</feature>
<feature type="cross-link" description="Glycyl lysine isopeptide (Lys-Gly) (interchain with G-Cter in SUMO2)" evidence="2">
    <location>
        <position position="523"/>
    </location>
</feature>
<name>DDX5_PONAB</name>
<proteinExistence type="evidence at transcript level"/>